<proteinExistence type="inferred from homology"/>
<keyword id="KW-1185">Reference proteome</keyword>
<keyword id="KW-0687">Ribonucleoprotein</keyword>
<keyword id="KW-0689">Ribosomal protein</keyword>
<gene>
    <name evidence="1" type="primary">rplM</name>
    <name type="ordered locus">BBta_4592</name>
</gene>
<organism>
    <name type="scientific">Bradyrhizobium sp. (strain BTAi1 / ATCC BAA-1182)</name>
    <dbReference type="NCBI Taxonomy" id="288000"/>
    <lineage>
        <taxon>Bacteria</taxon>
        <taxon>Pseudomonadati</taxon>
        <taxon>Pseudomonadota</taxon>
        <taxon>Alphaproteobacteria</taxon>
        <taxon>Hyphomicrobiales</taxon>
        <taxon>Nitrobacteraceae</taxon>
        <taxon>Bradyrhizobium</taxon>
    </lineage>
</organism>
<accession>A5EKC7</accession>
<sequence length="154" mass="17420">MKTFSAKPAEVQKKWVVIDAKGLVVGRLATLVAMRLRGKHLPIYTPHVDCGDNVIIVNAKHAVFTGRKREQKTYYKHTGFVGHVKERTARQILEGRFPERVLEKAVERMIPRGPLGRVQMGNLRVYGGPDHPHEAQNPEKIDIAKLNRKNTRAA</sequence>
<protein>
    <recommendedName>
        <fullName evidence="1">Large ribosomal subunit protein uL13</fullName>
    </recommendedName>
    <alternativeName>
        <fullName evidence="2">50S ribosomal protein L13</fullName>
    </alternativeName>
</protein>
<name>RL13_BRASB</name>
<feature type="chain" id="PRO_1000055351" description="Large ribosomal subunit protein uL13">
    <location>
        <begin position="1"/>
        <end position="154"/>
    </location>
</feature>
<dbReference type="EMBL" id="CP000494">
    <property type="protein sequence ID" value="ABQ36621.1"/>
    <property type="molecule type" value="Genomic_DNA"/>
</dbReference>
<dbReference type="RefSeq" id="WP_008966110.1">
    <property type="nucleotide sequence ID" value="NC_009485.1"/>
</dbReference>
<dbReference type="SMR" id="A5EKC7"/>
<dbReference type="STRING" id="288000.BBta_4592"/>
<dbReference type="KEGG" id="bbt:BBta_4592"/>
<dbReference type="eggNOG" id="COG0102">
    <property type="taxonomic scope" value="Bacteria"/>
</dbReference>
<dbReference type="HOGENOM" id="CLU_082184_2_0_5"/>
<dbReference type="OrthoDB" id="9801330at2"/>
<dbReference type="Proteomes" id="UP000000246">
    <property type="component" value="Chromosome"/>
</dbReference>
<dbReference type="GO" id="GO:0022625">
    <property type="term" value="C:cytosolic large ribosomal subunit"/>
    <property type="evidence" value="ECO:0007669"/>
    <property type="project" value="TreeGrafter"/>
</dbReference>
<dbReference type="GO" id="GO:0003729">
    <property type="term" value="F:mRNA binding"/>
    <property type="evidence" value="ECO:0007669"/>
    <property type="project" value="TreeGrafter"/>
</dbReference>
<dbReference type="GO" id="GO:0003735">
    <property type="term" value="F:structural constituent of ribosome"/>
    <property type="evidence" value="ECO:0007669"/>
    <property type="project" value="InterPro"/>
</dbReference>
<dbReference type="GO" id="GO:0017148">
    <property type="term" value="P:negative regulation of translation"/>
    <property type="evidence" value="ECO:0007669"/>
    <property type="project" value="TreeGrafter"/>
</dbReference>
<dbReference type="GO" id="GO:0006412">
    <property type="term" value="P:translation"/>
    <property type="evidence" value="ECO:0007669"/>
    <property type="project" value="UniProtKB-UniRule"/>
</dbReference>
<dbReference type="CDD" id="cd00392">
    <property type="entry name" value="Ribosomal_L13"/>
    <property type="match status" value="1"/>
</dbReference>
<dbReference type="FunFam" id="3.90.1180.10:FF:000001">
    <property type="entry name" value="50S ribosomal protein L13"/>
    <property type="match status" value="1"/>
</dbReference>
<dbReference type="Gene3D" id="3.90.1180.10">
    <property type="entry name" value="Ribosomal protein L13"/>
    <property type="match status" value="1"/>
</dbReference>
<dbReference type="HAMAP" id="MF_01366">
    <property type="entry name" value="Ribosomal_uL13"/>
    <property type="match status" value="1"/>
</dbReference>
<dbReference type="InterPro" id="IPR005822">
    <property type="entry name" value="Ribosomal_uL13"/>
</dbReference>
<dbReference type="InterPro" id="IPR005823">
    <property type="entry name" value="Ribosomal_uL13_bac-type"/>
</dbReference>
<dbReference type="InterPro" id="IPR036899">
    <property type="entry name" value="Ribosomal_uL13_sf"/>
</dbReference>
<dbReference type="NCBIfam" id="TIGR01066">
    <property type="entry name" value="rplM_bact"/>
    <property type="match status" value="1"/>
</dbReference>
<dbReference type="PANTHER" id="PTHR11545:SF2">
    <property type="entry name" value="LARGE RIBOSOMAL SUBUNIT PROTEIN UL13M"/>
    <property type="match status" value="1"/>
</dbReference>
<dbReference type="PANTHER" id="PTHR11545">
    <property type="entry name" value="RIBOSOMAL PROTEIN L13"/>
    <property type="match status" value="1"/>
</dbReference>
<dbReference type="Pfam" id="PF00572">
    <property type="entry name" value="Ribosomal_L13"/>
    <property type="match status" value="1"/>
</dbReference>
<dbReference type="PIRSF" id="PIRSF002181">
    <property type="entry name" value="Ribosomal_L13"/>
    <property type="match status" value="1"/>
</dbReference>
<dbReference type="SUPFAM" id="SSF52161">
    <property type="entry name" value="Ribosomal protein L13"/>
    <property type="match status" value="1"/>
</dbReference>
<reference key="1">
    <citation type="journal article" date="2007" name="Science">
        <title>Legumes symbioses: absence of nod genes in photosynthetic bradyrhizobia.</title>
        <authorList>
            <person name="Giraud E."/>
            <person name="Moulin L."/>
            <person name="Vallenet D."/>
            <person name="Barbe V."/>
            <person name="Cytryn E."/>
            <person name="Avarre J.-C."/>
            <person name="Jaubert M."/>
            <person name="Simon D."/>
            <person name="Cartieaux F."/>
            <person name="Prin Y."/>
            <person name="Bena G."/>
            <person name="Hannibal L."/>
            <person name="Fardoux J."/>
            <person name="Kojadinovic M."/>
            <person name="Vuillet L."/>
            <person name="Lajus A."/>
            <person name="Cruveiller S."/>
            <person name="Rouy Z."/>
            <person name="Mangenot S."/>
            <person name="Segurens B."/>
            <person name="Dossat C."/>
            <person name="Franck W.L."/>
            <person name="Chang W.-S."/>
            <person name="Saunders E."/>
            <person name="Bruce D."/>
            <person name="Richardson P."/>
            <person name="Normand P."/>
            <person name="Dreyfus B."/>
            <person name="Pignol D."/>
            <person name="Stacey G."/>
            <person name="Emerich D."/>
            <person name="Vermeglio A."/>
            <person name="Medigue C."/>
            <person name="Sadowsky M."/>
        </authorList>
    </citation>
    <scope>NUCLEOTIDE SEQUENCE [LARGE SCALE GENOMIC DNA]</scope>
    <source>
        <strain>BTAi1 / ATCC BAA-1182</strain>
    </source>
</reference>
<comment type="function">
    <text evidence="1">This protein is one of the early assembly proteins of the 50S ribosomal subunit, although it is not seen to bind rRNA by itself. It is important during the early stages of 50S assembly.</text>
</comment>
<comment type="subunit">
    <text evidence="1">Part of the 50S ribosomal subunit.</text>
</comment>
<comment type="similarity">
    <text evidence="1">Belongs to the universal ribosomal protein uL13 family.</text>
</comment>
<evidence type="ECO:0000255" key="1">
    <source>
        <dbReference type="HAMAP-Rule" id="MF_01366"/>
    </source>
</evidence>
<evidence type="ECO:0000305" key="2"/>